<reference key="1">
    <citation type="journal article" date="1998" name="Nature">
        <title>Deciphering the biology of Mycobacterium tuberculosis from the complete genome sequence.</title>
        <authorList>
            <person name="Cole S.T."/>
            <person name="Brosch R."/>
            <person name="Parkhill J."/>
            <person name="Garnier T."/>
            <person name="Churcher C.M."/>
            <person name="Harris D.E."/>
            <person name="Gordon S.V."/>
            <person name="Eiglmeier K."/>
            <person name="Gas S."/>
            <person name="Barry C.E. III"/>
            <person name="Tekaia F."/>
            <person name="Badcock K."/>
            <person name="Basham D."/>
            <person name="Brown D."/>
            <person name="Chillingworth T."/>
            <person name="Connor R."/>
            <person name="Davies R.M."/>
            <person name="Devlin K."/>
            <person name="Feltwell T."/>
            <person name="Gentles S."/>
            <person name="Hamlin N."/>
            <person name="Holroyd S."/>
            <person name="Hornsby T."/>
            <person name="Jagels K."/>
            <person name="Krogh A."/>
            <person name="McLean J."/>
            <person name="Moule S."/>
            <person name="Murphy L.D."/>
            <person name="Oliver S."/>
            <person name="Osborne J."/>
            <person name="Quail M.A."/>
            <person name="Rajandream M.A."/>
            <person name="Rogers J."/>
            <person name="Rutter S."/>
            <person name="Seeger K."/>
            <person name="Skelton S."/>
            <person name="Squares S."/>
            <person name="Squares R."/>
            <person name="Sulston J.E."/>
            <person name="Taylor K."/>
            <person name="Whitehead S."/>
            <person name="Barrell B.G."/>
        </authorList>
    </citation>
    <scope>NUCLEOTIDE SEQUENCE [LARGE SCALE GENOMIC DNA]</scope>
    <source>
        <strain>ATCC 25618 / H37Rv</strain>
    </source>
</reference>
<reference key="2">
    <citation type="journal article" date="2007" name="DNA Repair">
        <title>A distinct role of formamidopyrimidine DNA glycosylase (MutM) in down-regulation of accumulation of G, C mutations and protection against oxidative stress in mycobacteria.</title>
        <authorList>
            <person name="Jain R."/>
            <person name="Kumar P."/>
            <person name="Varshney U."/>
        </authorList>
    </citation>
    <scope>FUNCTION</scope>
    <scope>CATALYTIC ACTIVITY</scope>
    <source>
        <strain>ATCC 25618 / H37Rv</strain>
    </source>
</reference>
<reference key="3">
    <citation type="journal article" date="2010" name="Microbiology">
        <title>A distinct physiological role of MutY in mutation prevention in mycobacteria.</title>
        <authorList>
            <person name="Kurthkoti K."/>
            <person name="Srinath T."/>
            <person name="Kumar P."/>
            <person name="Malshetty V.S."/>
            <person name="Sang P.B."/>
            <person name="Jain R."/>
            <person name="Manjunath R."/>
            <person name="Varshney U."/>
        </authorList>
    </citation>
    <scope>FUNCTION</scope>
    <scope>DNA-BINDING</scope>
    <scope>CATALYTIC ACTIVITY</scope>
    <source>
        <strain>ATCC 25618 / H37Rv</strain>
    </source>
</reference>
<reference key="4">
    <citation type="journal article" date="2011" name="Mol. Cell. Proteomics">
        <title>Proteogenomic analysis of Mycobacterium tuberculosis by high resolution mass spectrometry.</title>
        <authorList>
            <person name="Kelkar D.S."/>
            <person name="Kumar D."/>
            <person name="Kumar P."/>
            <person name="Balakrishnan L."/>
            <person name="Muthusamy B."/>
            <person name="Yadav A.K."/>
            <person name="Shrivastava P."/>
            <person name="Marimuthu A."/>
            <person name="Anand S."/>
            <person name="Sundaram H."/>
            <person name="Kingsbury R."/>
            <person name="Harsha H.C."/>
            <person name="Nair B."/>
            <person name="Prasad T.S."/>
            <person name="Chauhan D.S."/>
            <person name="Katoch K."/>
            <person name="Katoch V.M."/>
            <person name="Kumar P."/>
            <person name="Chaerkady R."/>
            <person name="Ramachandran S."/>
            <person name="Dash D."/>
            <person name="Pandey A."/>
        </authorList>
    </citation>
    <scope>IDENTIFICATION BY MASS SPECTROMETRY [LARGE SCALE ANALYSIS]</scope>
    <source>
        <strain>ATCC 25618 / H37Rv</strain>
    </source>
</reference>
<reference key="5">
    <citation type="journal article" date="2011" name="Tuberculosis">
        <title>Base excision and nucleotide excision repair pathways in mycobacteria.</title>
        <authorList>
            <person name="Kurthkoti K."/>
            <person name="Varshney U."/>
        </authorList>
    </citation>
    <scope>REVIEW</scope>
</reference>
<dbReference type="EC" id="3.2.2.31" evidence="3 4"/>
<dbReference type="EMBL" id="AL123456">
    <property type="protein sequence ID" value="CCP46412.1"/>
    <property type="molecule type" value="Genomic_DNA"/>
</dbReference>
<dbReference type="PIR" id="F70804">
    <property type="entry name" value="F70804"/>
</dbReference>
<dbReference type="RefSeq" id="NP_218106.1">
    <property type="nucleotide sequence ID" value="NC_000962.3"/>
</dbReference>
<dbReference type="RefSeq" id="WP_003419495.1">
    <property type="nucleotide sequence ID" value="NZ_NVQJ01000014.1"/>
</dbReference>
<dbReference type="SMR" id="P9WQ09"/>
<dbReference type="FunCoup" id="P9WQ09">
    <property type="interactions" value="75"/>
</dbReference>
<dbReference type="STRING" id="83332.Rv3589"/>
<dbReference type="PaxDb" id="83332-Rv3589"/>
<dbReference type="DNASU" id="886639"/>
<dbReference type="GeneID" id="886639"/>
<dbReference type="KEGG" id="mtu:Rv3589"/>
<dbReference type="KEGG" id="mtv:RVBD_3589"/>
<dbReference type="PATRIC" id="fig|83332.111.peg.3999"/>
<dbReference type="TubercuList" id="Rv3589"/>
<dbReference type="eggNOG" id="COG1194">
    <property type="taxonomic scope" value="Bacteria"/>
</dbReference>
<dbReference type="InParanoid" id="P9WQ09"/>
<dbReference type="OrthoDB" id="9802365at2"/>
<dbReference type="PhylomeDB" id="P9WQ09"/>
<dbReference type="Proteomes" id="UP000001584">
    <property type="component" value="Chromosome"/>
</dbReference>
<dbReference type="GO" id="GO:0005886">
    <property type="term" value="C:plasma membrane"/>
    <property type="evidence" value="ECO:0007005"/>
    <property type="project" value="MTBBASE"/>
</dbReference>
<dbReference type="GO" id="GO:0051539">
    <property type="term" value="F:4 iron, 4 sulfur cluster binding"/>
    <property type="evidence" value="ECO:0007669"/>
    <property type="project" value="UniProtKB-KW"/>
</dbReference>
<dbReference type="GO" id="GO:0034039">
    <property type="term" value="F:8-oxo-7,8-dihydroguanine DNA N-glycosylase activity"/>
    <property type="evidence" value="ECO:0000318"/>
    <property type="project" value="GO_Central"/>
</dbReference>
<dbReference type="GO" id="GO:0035485">
    <property type="term" value="F:adenine/guanine mispair binding"/>
    <property type="evidence" value="ECO:0000318"/>
    <property type="project" value="GO_Central"/>
</dbReference>
<dbReference type="GO" id="GO:0046872">
    <property type="term" value="F:metal ion binding"/>
    <property type="evidence" value="ECO:0007669"/>
    <property type="project" value="UniProtKB-KW"/>
</dbReference>
<dbReference type="GO" id="GO:0032357">
    <property type="term" value="F:oxidized purine DNA binding"/>
    <property type="evidence" value="ECO:0000318"/>
    <property type="project" value="GO_Central"/>
</dbReference>
<dbReference type="GO" id="GO:0000701">
    <property type="term" value="F:purine-specific mismatch base pair DNA N-glycosylase activity"/>
    <property type="evidence" value="ECO:0000318"/>
    <property type="project" value="GO_Central"/>
</dbReference>
<dbReference type="GO" id="GO:0006284">
    <property type="term" value="P:base-excision repair"/>
    <property type="evidence" value="ECO:0000318"/>
    <property type="project" value="GO_Central"/>
</dbReference>
<dbReference type="GO" id="GO:0006298">
    <property type="term" value="P:mismatch repair"/>
    <property type="evidence" value="ECO:0000318"/>
    <property type="project" value="GO_Central"/>
</dbReference>
<dbReference type="CDD" id="cd00056">
    <property type="entry name" value="ENDO3c"/>
    <property type="match status" value="1"/>
</dbReference>
<dbReference type="FunFam" id="1.10.340.30:FF:000003">
    <property type="entry name" value="A/G-specific adenine glycosylase"/>
    <property type="match status" value="1"/>
</dbReference>
<dbReference type="Gene3D" id="1.10.1670.10">
    <property type="entry name" value="Helix-hairpin-Helix base-excision DNA repair enzymes (C-terminal)"/>
    <property type="match status" value="1"/>
</dbReference>
<dbReference type="Gene3D" id="1.10.340.30">
    <property type="entry name" value="Hypothetical protein, domain 2"/>
    <property type="match status" value="1"/>
</dbReference>
<dbReference type="InterPro" id="IPR011257">
    <property type="entry name" value="DNA_glycosylase"/>
</dbReference>
<dbReference type="InterPro" id="IPR003651">
    <property type="entry name" value="Endonuclease3_FeS-loop_motif"/>
</dbReference>
<dbReference type="InterPro" id="IPR003265">
    <property type="entry name" value="HhH-GPD_domain"/>
</dbReference>
<dbReference type="InterPro" id="IPR023170">
    <property type="entry name" value="HhH_base_excis_C"/>
</dbReference>
<dbReference type="InterPro" id="IPR000445">
    <property type="entry name" value="HhH_motif"/>
</dbReference>
<dbReference type="InterPro" id="IPR044298">
    <property type="entry name" value="MIG/MutY"/>
</dbReference>
<dbReference type="PANTHER" id="PTHR42944">
    <property type="entry name" value="ADENINE DNA GLYCOSYLASE"/>
    <property type="match status" value="1"/>
</dbReference>
<dbReference type="PANTHER" id="PTHR42944:SF1">
    <property type="entry name" value="ADENINE DNA GLYCOSYLASE"/>
    <property type="match status" value="1"/>
</dbReference>
<dbReference type="Pfam" id="PF00633">
    <property type="entry name" value="HHH"/>
    <property type="match status" value="1"/>
</dbReference>
<dbReference type="Pfam" id="PF00730">
    <property type="entry name" value="HhH-GPD"/>
    <property type="match status" value="1"/>
</dbReference>
<dbReference type="SMART" id="SM00478">
    <property type="entry name" value="ENDO3c"/>
    <property type="match status" value="1"/>
</dbReference>
<dbReference type="SMART" id="SM00525">
    <property type="entry name" value="FES"/>
    <property type="match status" value="1"/>
</dbReference>
<dbReference type="SUPFAM" id="SSF48150">
    <property type="entry name" value="DNA-glycosylase"/>
    <property type="match status" value="1"/>
</dbReference>
<protein>
    <recommendedName>
        <fullName>Adenine DNA glycosylase</fullName>
        <ecNumber evidence="3 4">3.2.2.31</ecNumber>
    </recommendedName>
</protein>
<proteinExistence type="evidence at protein level"/>
<organism>
    <name type="scientific">Mycobacterium tuberculosis (strain ATCC 25618 / H37Rv)</name>
    <dbReference type="NCBI Taxonomy" id="83332"/>
    <lineage>
        <taxon>Bacteria</taxon>
        <taxon>Bacillati</taxon>
        <taxon>Actinomycetota</taxon>
        <taxon>Actinomycetes</taxon>
        <taxon>Mycobacteriales</taxon>
        <taxon>Mycobacteriaceae</taxon>
        <taxon>Mycobacterium</taxon>
        <taxon>Mycobacterium tuberculosis complex</taxon>
    </lineage>
</organism>
<keyword id="KW-0004">4Fe-4S</keyword>
<keyword id="KW-0227">DNA damage</keyword>
<keyword id="KW-0234">DNA repair</keyword>
<keyword id="KW-0326">Glycosidase</keyword>
<keyword id="KW-0378">Hydrolase</keyword>
<keyword id="KW-0408">Iron</keyword>
<keyword id="KW-0411">Iron-sulfur</keyword>
<keyword id="KW-0479">Metal-binding</keyword>
<keyword id="KW-1185">Reference proteome</keyword>
<sequence length="304" mass="33684">MPHILPEPSVTGPRHISDTNLLAWYQRSHRDLPWREPGVSPWQILVSEFMLQQTPAARVLAIWPDWVRRWPTPSATATASTADVLRAWGKLGYPRRAKRLHECATVIARDHNDVVPDDIEILVTLPGVGSYTARAVACFAYRQRVPVVDTNVRRVVARAVHGRADAGAPSVPRDHADVLALLPHRETAPEFSVALMELGATVCTARTPRCGLCPLDWCAWRHAGYPPSDGPPRRGQAYTGTDRQVRGRLLDVLRAAEFPVTRAELDVAWLTDTAQRDRALESLLADALVTRTVDGRFALPGEGF</sequence>
<evidence type="ECO:0000250" key="1"/>
<evidence type="ECO:0000250" key="2">
    <source>
        <dbReference type="UniProtKB" id="P83847"/>
    </source>
</evidence>
<evidence type="ECO:0000269" key="3">
    <source>
    </source>
</evidence>
<evidence type="ECO:0000269" key="4">
    <source>
    </source>
</evidence>
<evidence type="ECO:0000305" key="5"/>
<name>MUTY_MYCTU</name>
<comment type="function">
    <text evidence="3 4">Adenine glycosylase active on G:A and C:A mispairs, as well as processing 7,8-dihydro-8-oxoguanine:A (8-oxoG) mismatches. Minor activity against 8-oxoG:G and 8-oxo:T mismatches is also seen. Bind dsDNA oligonucleotides containing the above mismatches.</text>
</comment>
<comment type="catalytic activity">
    <reaction evidence="3 4">
        <text>Hydrolyzes free adenine bases from 7,8-dihydro-8-oxoguanine:adenine mismatched double-stranded DNA, leaving an apurinic site.</text>
        <dbReference type="EC" id="3.2.2.31"/>
    </reaction>
</comment>
<comment type="cofactor">
    <cofactor evidence="5">
        <name>[4Fe-4S] cluster</name>
        <dbReference type="ChEBI" id="CHEBI:49883"/>
    </cofactor>
    <text evidence="5">Binds 1 [4Fe-4S] cluster. The cluster does not appear to play a role in catalysis, but is probably involved in the proper positioning of the enzyme along the DNA strand.</text>
</comment>
<comment type="similarity">
    <text evidence="5">Belongs to the Nth/MutY family.</text>
</comment>
<gene>
    <name type="primary">mutY</name>
    <name type="ordered locus">Rv3589</name>
</gene>
<feature type="chain" id="PRO_0000421385" description="Adenine DNA glycosylase">
    <location>
        <begin position="1"/>
        <end position="304"/>
    </location>
</feature>
<feature type="domain" description="HhH">
    <location>
        <begin position="111"/>
        <end position="139"/>
    </location>
</feature>
<feature type="active site" description="Proton donor/acceptor" evidence="2">
    <location>
        <position position="48"/>
    </location>
</feature>
<feature type="binding site" evidence="1">
    <location>
        <position position="203"/>
    </location>
    <ligand>
        <name>[4Fe-4S] cluster</name>
        <dbReference type="ChEBI" id="CHEBI:49883"/>
    </ligand>
</feature>
<feature type="binding site" evidence="1">
    <location>
        <position position="210"/>
    </location>
    <ligand>
        <name>[4Fe-4S] cluster</name>
        <dbReference type="ChEBI" id="CHEBI:49883"/>
    </ligand>
</feature>
<feature type="binding site" evidence="1">
    <location>
        <position position="213"/>
    </location>
    <ligand>
        <name>[4Fe-4S] cluster</name>
        <dbReference type="ChEBI" id="CHEBI:49883"/>
    </ligand>
</feature>
<feature type="binding site" evidence="1">
    <location>
        <position position="218"/>
    </location>
    <ligand>
        <name>[4Fe-4S] cluster</name>
        <dbReference type="ChEBI" id="CHEBI:49883"/>
    </ligand>
</feature>
<feature type="site" description="Transition state stabilizer" evidence="2">
    <location>
        <position position="149"/>
    </location>
</feature>
<accession>P9WQ09</accession>
<accession>F2GKC9</accession>
<accession>O53574</accession>
<accession>Q7D581</accession>